<organism>
    <name type="scientific">Mus musculus</name>
    <name type="common">Mouse</name>
    <dbReference type="NCBI Taxonomy" id="10090"/>
    <lineage>
        <taxon>Eukaryota</taxon>
        <taxon>Metazoa</taxon>
        <taxon>Chordata</taxon>
        <taxon>Craniata</taxon>
        <taxon>Vertebrata</taxon>
        <taxon>Euteleostomi</taxon>
        <taxon>Mammalia</taxon>
        <taxon>Eutheria</taxon>
        <taxon>Euarchontoglires</taxon>
        <taxon>Glires</taxon>
        <taxon>Rodentia</taxon>
        <taxon>Myomorpha</taxon>
        <taxon>Muroidea</taxon>
        <taxon>Muridae</taxon>
        <taxon>Murinae</taxon>
        <taxon>Mus</taxon>
        <taxon>Mus</taxon>
    </lineage>
</organism>
<accession>Q3UPL6</accession>
<accession>B2RVI3</accession>
<name>M4A15_MOUSE</name>
<reference key="1">
    <citation type="journal article" date="2005" name="Science">
        <title>The transcriptional landscape of the mammalian genome.</title>
        <authorList>
            <person name="Carninci P."/>
            <person name="Kasukawa T."/>
            <person name="Katayama S."/>
            <person name="Gough J."/>
            <person name="Frith M.C."/>
            <person name="Maeda N."/>
            <person name="Oyama R."/>
            <person name="Ravasi T."/>
            <person name="Lenhard B."/>
            <person name="Wells C."/>
            <person name="Kodzius R."/>
            <person name="Shimokawa K."/>
            <person name="Bajic V.B."/>
            <person name="Brenner S.E."/>
            <person name="Batalov S."/>
            <person name="Forrest A.R."/>
            <person name="Zavolan M."/>
            <person name="Davis M.J."/>
            <person name="Wilming L.G."/>
            <person name="Aidinis V."/>
            <person name="Allen J.E."/>
            <person name="Ambesi-Impiombato A."/>
            <person name="Apweiler R."/>
            <person name="Aturaliya R.N."/>
            <person name="Bailey T.L."/>
            <person name="Bansal M."/>
            <person name="Baxter L."/>
            <person name="Beisel K.W."/>
            <person name="Bersano T."/>
            <person name="Bono H."/>
            <person name="Chalk A.M."/>
            <person name="Chiu K.P."/>
            <person name="Choudhary V."/>
            <person name="Christoffels A."/>
            <person name="Clutterbuck D.R."/>
            <person name="Crowe M.L."/>
            <person name="Dalla E."/>
            <person name="Dalrymple B.P."/>
            <person name="de Bono B."/>
            <person name="Della Gatta G."/>
            <person name="di Bernardo D."/>
            <person name="Down T."/>
            <person name="Engstrom P."/>
            <person name="Fagiolini M."/>
            <person name="Faulkner G."/>
            <person name="Fletcher C.F."/>
            <person name="Fukushima T."/>
            <person name="Furuno M."/>
            <person name="Futaki S."/>
            <person name="Gariboldi M."/>
            <person name="Georgii-Hemming P."/>
            <person name="Gingeras T.R."/>
            <person name="Gojobori T."/>
            <person name="Green R.E."/>
            <person name="Gustincich S."/>
            <person name="Harbers M."/>
            <person name="Hayashi Y."/>
            <person name="Hensch T.K."/>
            <person name="Hirokawa N."/>
            <person name="Hill D."/>
            <person name="Huminiecki L."/>
            <person name="Iacono M."/>
            <person name="Ikeo K."/>
            <person name="Iwama A."/>
            <person name="Ishikawa T."/>
            <person name="Jakt M."/>
            <person name="Kanapin A."/>
            <person name="Katoh M."/>
            <person name="Kawasawa Y."/>
            <person name="Kelso J."/>
            <person name="Kitamura H."/>
            <person name="Kitano H."/>
            <person name="Kollias G."/>
            <person name="Krishnan S.P."/>
            <person name="Kruger A."/>
            <person name="Kummerfeld S.K."/>
            <person name="Kurochkin I.V."/>
            <person name="Lareau L.F."/>
            <person name="Lazarevic D."/>
            <person name="Lipovich L."/>
            <person name="Liu J."/>
            <person name="Liuni S."/>
            <person name="McWilliam S."/>
            <person name="Madan Babu M."/>
            <person name="Madera M."/>
            <person name="Marchionni L."/>
            <person name="Matsuda H."/>
            <person name="Matsuzawa S."/>
            <person name="Miki H."/>
            <person name="Mignone F."/>
            <person name="Miyake S."/>
            <person name="Morris K."/>
            <person name="Mottagui-Tabar S."/>
            <person name="Mulder N."/>
            <person name="Nakano N."/>
            <person name="Nakauchi H."/>
            <person name="Ng P."/>
            <person name="Nilsson R."/>
            <person name="Nishiguchi S."/>
            <person name="Nishikawa S."/>
            <person name="Nori F."/>
            <person name="Ohara O."/>
            <person name="Okazaki Y."/>
            <person name="Orlando V."/>
            <person name="Pang K.C."/>
            <person name="Pavan W.J."/>
            <person name="Pavesi G."/>
            <person name="Pesole G."/>
            <person name="Petrovsky N."/>
            <person name="Piazza S."/>
            <person name="Reed J."/>
            <person name="Reid J.F."/>
            <person name="Ring B.Z."/>
            <person name="Ringwald M."/>
            <person name="Rost B."/>
            <person name="Ruan Y."/>
            <person name="Salzberg S.L."/>
            <person name="Sandelin A."/>
            <person name="Schneider C."/>
            <person name="Schoenbach C."/>
            <person name="Sekiguchi K."/>
            <person name="Semple C.A."/>
            <person name="Seno S."/>
            <person name="Sessa L."/>
            <person name="Sheng Y."/>
            <person name="Shibata Y."/>
            <person name="Shimada H."/>
            <person name="Shimada K."/>
            <person name="Silva D."/>
            <person name="Sinclair B."/>
            <person name="Sperling S."/>
            <person name="Stupka E."/>
            <person name="Sugiura K."/>
            <person name="Sultana R."/>
            <person name="Takenaka Y."/>
            <person name="Taki K."/>
            <person name="Tammoja K."/>
            <person name="Tan S.L."/>
            <person name="Tang S."/>
            <person name="Taylor M.S."/>
            <person name="Tegner J."/>
            <person name="Teichmann S.A."/>
            <person name="Ueda H.R."/>
            <person name="van Nimwegen E."/>
            <person name="Verardo R."/>
            <person name="Wei C.L."/>
            <person name="Yagi K."/>
            <person name="Yamanishi H."/>
            <person name="Zabarovsky E."/>
            <person name="Zhu S."/>
            <person name="Zimmer A."/>
            <person name="Hide W."/>
            <person name="Bult C."/>
            <person name="Grimmond S.M."/>
            <person name="Teasdale R.D."/>
            <person name="Liu E.T."/>
            <person name="Brusic V."/>
            <person name="Quackenbush J."/>
            <person name="Wahlestedt C."/>
            <person name="Mattick J.S."/>
            <person name="Hume D.A."/>
            <person name="Kai C."/>
            <person name="Sasaki D."/>
            <person name="Tomaru Y."/>
            <person name="Fukuda S."/>
            <person name="Kanamori-Katayama M."/>
            <person name="Suzuki M."/>
            <person name="Aoki J."/>
            <person name="Arakawa T."/>
            <person name="Iida J."/>
            <person name="Imamura K."/>
            <person name="Itoh M."/>
            <person name="Kato T."/>
            <person name="Kawaji H."/>
            <person name="Kawagashira N."/>
            <person name="Kawashima T."/>
            <person name="Kojima M."/>
            <person name="Kondo S."/>
            <person name="Konno H."/>
            <person name="Nakano K."/>
            <person name="Ninomiya N."/>
            <person name="Nishio T."/>
            <person name="Okada M."/>
            <person name="Plessy C."/>
            <person name="Shibata K."/>
            <person name="Shiraki T."/>
            <person name="Suzuki S."/>
            <person name="Tagami M."/>
            <person name="Waki K."/>
            <person name="Watahiki A."/>
            <person name="Okamura-Oho Y."/>
            <person name="Suzuki H."/>
            <person name="Kawai J."/>
            <person name="Hayashizaki Y."/>
        </authorList>
    </citation>
    <scope>NUCLEOTIDE SEQUENCE [LARGE SCALE MRNA]</scope>
    <source>
        <strain>C57BL/6J</strain>
        <tissue>Olfactory bulb</tissue>
    </source>
</reference>
<reference key="2">
    <citation type="journal article" date="2004" name="Genome Res.">
        <title>The status, quality, and expansion of the NIH full-length cDNA project: the Mammalian Gene Collection (MGC).</title>
        <authorList>
            <consortium name="The MGC Project Team"/>
        </authorList>
    </citation>
    <scope>NUCLEOTIDE SEQUENCE [LARGE SCALE MRNA]</scope>
    <source>
        <tissue>Brain</tissue>
    </source>
</reference>
<sequence length="245" mass="25941">MWERRGRGESAAGTAAVASRNASGLRPPPAILPTSMCQPPGIMQFEESQLGAQAPRATQPPDLRPMETFLTGEPKALGTVQILIGLIHLGFGSVLLMVRRGHLGMLFIEGGVPFWGGACFIISGSLSVAAERNHTSCLLKSSLGTNILSAMAAFAGTAILLMDFGVTNWDVGRGYLAVLTIFTILEFFIAVIATHFGCQATRAQTNASVIFLPNAFGTDFNIPSPAVSPPPAYDNVAYMPKESSE</sequence>
<feature type="chain" id="PRO_0000320578" description="Membrane-spanning 4-domains subfamily A member 15">
    <location>
        <begin position="1"/>
        <end position="245"/>
    </location>
</feature>
<feature type="transmembrane region" description="Helical" evidence="2">
    <location>
        <begin position="78"/>
        <end position="98"/>
    </location>
</feature>
<feature type="transmembrane region" description="Helical" evidence="2">
    <location>
        <begin position="103"/>
        <end position="123"/>
    </location>
</feature>
<feature type="transmembrane region" description="Helical" evidence="2">
    <location>
        <begin position="147"/>
        <end position="167"/>
    </location>
</feature>
<feature type="transmembrane region" description="Helical" evidence="2">
    <location>
        <begin position="176"/>
        <end position="196"/>
    </location>
</feature>
<feature type="region of interest" description="Disordered" evidence="3">
    <location>
        <begin position="1"/>
        <end position="30"/>
    </location>
</feature>
<proteinExistence type="evidence at transcript level"/>
<comment type="function">
    <text evidence="1">May be involved in signal transduction as a component of a multimeric receptor complex.</text>
</comment>
<comment type="subcellular location">
    <subcellularLocation>
        <location evidence="4">Membrane</location>
        <topology evidence="4">Multi-pass membrane protein</topology>
    </subcellularLocation>
</comment>
<comment type="similarity">
    <text evidence="4">Belongs to the MS4A family.</text>
</comment>
<protein>
    <recommendedName>
        <fullName>Membrane-spanning 4-domains subfamily A member 15</fullName>
    </recommendedName>
</protein>
<keyword id="KW-0472">Membrane</keyword>
<keyword id="KW-0675">Receptor</keyword>
<keyword id="KW-1185">Reference proteome</keyword>
<keyword id="KW-0812">Transmembrane</keyword>
<keyword id="KW-1133">Transmembrane helix</keyword>
<evidence type="ECO:0000250" key="1"/>
<evidence type="ECO:0000255" key="2"/>
<evidence type="ECO:0000256" key="3">
    <source>
        <dbReference type="SAM" id="MobiDB-lite"/>
    </source>
</evidence>
<evidence type="ECO:0000305" key="4"/>
<gene>
    <name type="primary">Ms4a15</name>
</gene>
<dbReference type="EMBL" id="AK143446">
    <property type="protein sequence ID" value="BAE25379.1"/>
    <property type="molecule type" value="mRNA"/>
</dbReference>
<dbReference type="EMBL" id="BC147202">
    <property type="protein sequence ID" value="AAI47203.1"/>
    <property type="molecule type" value="mRNA"/>
</dbReference>
<dbReference type="CCDS" id="CCDS29594.1"/>
<dbReference type="RefSeq" id="NP_001030070.1">
    <property type="nucleotide sequence ID" value="NM_001034898.2"/>
</dbReference>
<dbReference type="SMR" id="Q3UPL6"/>
<dbReference type="FunCoup" id="Q3UPL6">
    <property type="interactions" value="768"/>
</dbReference>
<dbReference type="STRING" id="10090.ENSMUSP00000085234"/>
<dbReference type="PhosphoSitePlus" id="Q3UPL6"/>
<dbReference type="PaxDb" id="10090-ENSMUSP00000085234"/>
<dbReference type="ProteomicsDB" id="287282"/>
<dbReference type="Antibodypedia" id="27949">
    <property type="antibodies" value="58 antibodies from 11 providers"/>
</dbReference>
<dbReference type="Ensembl" id="ENSMUST00000087923.4">
    <property type="protein sequence ID" value="ENSMUSP00000085234.3"/>
    <property type="gene ID" value="ENSMUSG00000067571.5"/>
</dbReference>
<dbReference type="GeneID" id="545279"/>
<dbReference type="KEGG" id="mmu:545279"/>
<dbReference type="UCSC" id="uc008grl.1">
    <property type="organism name" value="mouse"/>
</dbReference>
<dbReference type="AGR" id="MGI:3617853"/>
<dbReference type="CTD" id="219995"/>
<dbReference type="MGI" id="MGI:3617853">
    <property type="gene designation" value="Ms4a15"/>
</dbReference>
<dbReference type="VEuPathDB" id="HostDB:ENSMUSG00000067571"/>
<dbReference type="eggNOG" id="ENOG502S2RH">
    <property type="taxonomic scope" value="Eukaryota"/>
</dbReference>
<dbReference type="GeneTree" id="ENSGT00940000162324"/>
<dbReference type="HOGENOM" id="CLU_091032_1_0_1"/>
<dbReference type="InParanoid" id="Q3UPL6"/>
<dbReference type="OMA" id="MQGMGNF"/>
<dbReference type="OrthoDB" id="8951938at2759"/>
<dbReference type="PhylomeDB" id="Q3UPL6"/>
<dbReference type="TreeFam" id="TF335157"/>
<dbReference type="BioGRID-ORCS" id="545279">
    <property type="hits" value="1 hit in 78 CRISPR screens"/>
</dbReference>
<dbReference type="PRO" id="PR:Q3UPL6"/>
<dbReference type="Proteomes" id="UP000000589">
    <property type="component" value="Chromosome 19"/>
</dbReference>
<dbReference type="RNAct" id="Q3UPL6">
    <property type="molecule type" value="protein"/>
</dbReference>
<dbReference type="Bgee" id="ENSMUSG00000067571">
    <property type="expression patterns" value="Expressed in molar tooth and 27 other cell types or tissues"/>
</dbReference>
<dbReference type="ExpressionAtlas" id="Q3UPL6">
    <property type="expression patterns" value="baseline and differential"/>
</dbReference>
<dbReference type="GO" id="GO:0016020">
    <property type="term" value="C:membrane"/>
    <property type="evidence" value="ECO:0007669"/>
    <property type="project" value="UniProtKB-SubCell"/>
</dbReference>
<dbReference type="InterPro" id="IPR007237">
    <property type="entry name" value="CD20-like"/>
</dbReference>
<dbReference type="InterPro" id="IPR030417">
    <property type="entry name" value="MS4A"/>
</dbReference>
<dbReference type="PANTHER" id="PTHR23320:SF51">
    <property type="entry name" value="MEMBRANE-SPANNING 4-DOMAINS SUBFAMILY A MEMBER 15"/>
    <property type="match status" value="1"/>
</dbReference>
<dbReference type="PANTHER" id="PTHR23320">
    <property type="entry name" value="MEMBRANE-SPANNING 4-DOMAINS SUBFAMILY A MS4A -RELATED"/>
    <property type="match status" value="1"/>
</dbReference>
<dbReference type="Pfam" id="PF04103">
    <property type="entry name" value="CD20"/>
    <property type="match status" value="1"/>
</dbReference>